<organismHost>
    <name type="scientific">Acanthamoeba polyphaga</name>
    <name type="common">Amoeba</name>
    <dbReference type="NCBI Taxonomy" id="5757"/>
</organismHost>
<sequence length="390" mass="46160">MKYDFLSKIPTDTKKIDYHHKKNIVKCATKIIKHFIDYDEVVTVAEMQSGKTEVMKRLIYLIRTHNDKLRSLNIEIDKYNIYLVLCASSINLKEQLKIKLPEIKHKIYHLNDIINFIKNEYENESLFLSMSDSSLIIFDECHCDIECSKTIDKFRTILDSYAKDNSTTYYKVGFSATPYEQVVAGFPKAIMKPGKGYYGIKDMFELNENSKPILFQAKDLTETDQVEDFFREISIDSWYYIFRLPGKNSSKETVINNIINYLRKNRIKFDSYIYDMNYRSNINDLIKNKPSKPTIIFIKEKLRLGEYLDTKYIYLVHDDPDNGHTHTTAQSLLGRCCGYHKKSHQTVIYCDYEKAWEHYQWIINDYDIDYIPTNAKYIKSNKQTKTNCMY</sequence>
<name>YL594_MIMIV</name>
<protein>
    <recommendedName>
        <fullName>Uncharacterized protein L594</fullName>
    </recommendedName>
</protein>
<keyword id="KW-1185">Reference proteome</keyword>
<proteinExistence type="predicted"/>
<gene>
    <name type="ordered locus">MIMI_L594</name>
</gene>
<organism>
    <name type="scientific">Acanthamoeba polyphaga mimivirus</name>
    <name type="common">APMV</name>
    <dbReference type="NCBI Taxonomy" id="212035"/>
    <lineage>
        <taxon>Viruses</taxon>
        <taxon>Varidnaviria</taxon>
        <taxon>Bamfordvirae</taxon>
        <taxon>Nucleocytoviricota</taxon>
        <taxon>Megaviricetes</taxon>
        <taxon>Imitervirales</taxon>
        <taxon>Mimiviridae</taxon>
        <taxon>Megamimivirinae</taxon>
        <taxon>Mimivirus</taxon>
        <taxon>Mimivirus bradfordmassiliense</taxon>
    </lineage>
</organism>
<reference key="1">
    <citation type="journal article" date="2004" name="Science">
        <title>The 1.2-megabase genome sequence of Mimivirus.</title>
        <authorList>
            <person name="Raoult D."/>
            <person name="Audic S."/>
            <person name="Robert C."/>
            <person name="Abergel C."/>
            <person name="Renesto P."/>
            <person name="Ogata H."/>
            <person name="La Scola B."/>
            <person name="Susan M."/>
            <person name="Claverie J.-M."/>
        </authorList>
    </citation>
    <scope>NUCLEOTIDE SEQUENCE [LARGE SCALE GENOMIC DNA]</scope>
    <source>
        <strain>Rowbotham-Bradford</strain>
    </source>
</reference>
<dbReference type="EMBL" id="AY653733">
    <property type="protein sequence ID" value="AAV50857.1"/>
    <property type="molecule type" value="Genomic_DNA"/>
</dbReference>
<dbReference type="KEGG" id="vg:9925230"/>
<dbReference type="OrthoDB" id="6239at10239"/>
<dbReference type="Proteomes" id="UP000001134">
    <property type="component" value="Genome"/>
</dbReference>
<dbReference type="Gene3D" id="3.40.50.300">
    <property type="entry name" value="P-loop containing nucleotide triphosphate hydrolases"/>
    <property type="match status" value="1"/>
</dbReference>
<dbReference type="InterPro" id="IPR027417">
    <property type="entry name" value="P-loop_NTPase"/>
</dbReference>
<dbReference type="SUPFAM" id="SSF52540">
    <property type="entry name" value="P-loop containing nucleoside triphosphate hydrolases"/>
    <property type="match status" value="1"/>
</dbReference>
<accession>Q5UP56</accession>
<feature type="chain" id="PRO_0000071298" description="Uncharacterized protein L594">
    <location>
        <begin position="1"/>
        <end position="390"/>
    </location>
</feature>